<name>LEU1_PROM3</name>
<gene>
    <name evidence="1" type="primary">leuA</name>
    <name type="ordered locus">P9303_09181</name>
</gene>
<evidence type="ECO:0000255" key="1">
    <source>
        <dbReference type="HAMAP-Rule" id="MF_01025"/>
    </source>
</evidence>
<keyword id="KW-0028">Amino-acid biosynthesis</keyword>
<keyword id="KW-0100">Branched-chain amino acid biosynthesis</keyword>
<keyword id="KW-0963">Cytoplasm</keyword>
<keyword id="KW-0432">Leucine biosynthesis</keyword>
<keyword id="KW-0464">Manganese</keyword>
<keyword id="KW-0479">Metal-binding</keyword>
<keyword id="KW-0808">Transferase</keyword>
<protein>
    <recommendedName>
        <fullName evidence="1">2-isopropylmalate synthase</fullName>
        <ecNumber evidence="1">2.3.3.13</ecNumber>
    </recommendedName>
    <alternativeName>
        <fullName evidence="1">Alpha-IPM synthase</fullName>
    </alternativeName>
    <alternativeName>
        <fullName evidence="1">Alpha-isopropylmalate synthase</fullName>
    </alternativeName>
</protein>
<feature type="chain" id="PRO_1000149243" description="2-isopropylmalate synthase">
    <location>
        <begin position="1"/>
        <end position="540"/>
    </location>
</feature>
<feature type="domain" description="Pyruvate carboxyltransferase" evidence="1">
    <location>
        <begin position="8"/>
        <end position="271"/>
    </location>
</feature>
<feature type="region of interest" description="Regulatory domain" evidence="1">
    <location>
        <begin position="408"/>
        <end position="540"/>
    </location>
</feature>
<feature type="binding site" evidence="1">
    <location>
        <position position="17"/>
    </location>
    <ligand>
        <name>Mn(2+)</name>
        <dbReference type="ChEBI" id="CHEBI:29035"/>
    </ligand>
</feature>
<feature type="binding site" evidence="1">
    <location>
        <position position="208"/>
    </location>
    <ligand>
        <name>Mn(2+)</name>
        <dbReference type="ChEBI" id="CHEBI:29035"/>
    </ligand>
</feature>
<feature type="binding site" evidence="1">
    <location>
        <position position="210"/>
    </location>
    <ligand>
        <name>Mn(2+)</name>
        <dbReference type="ChEBI" id="CHEBI:29035"/>
    </ligand>
</feature>
<feature type="binding site" evidence="1">
    <location>
        <position position="244"/>
    </location>
    <ligand>
        <name>Mn(2+)</name>
        <dbReference type="ChEBI" id="CHEBI:29035"/>
    </ligand>
</feature>
<comment type="function">
    <text evidence="1">Catalyzes the condensation of the acetyl group of acetyl-CoA with 3-methyl-2-oxobutanoate (2-ketoisovalerate) to form 3-carboxy-3-hydroxy-4-methylpentanoate (2-isopropylmalate).</text>
</comment>
<comment type="catalytic activity">
    <reaction evidence="1">
        <text>3-methyl-2-oxobutanoate + acetyl-CoA + H2O = (2S)-2-isopropylmalate + CoA + H(+)</text>
        <dbReference type="Rhea" id="RHEA:21524"/>
        <dbReference type="ChEBI" id="CHEBI:1178"/>
        <dbReference type="ChEBI" id="CHEBI:11851"/>
        <dbReference type="ChEBI" id="CHEBI:15377"/>
        <dbReference type="ChEBI" id="CHEBI:15378"/>
        <dbReference type="ChEBI" id="CHEBI:57287"/>
        <dbReference type="ChEBI" id="CHEBI:57288"/>
        <dbReference type="EC" id="2.3.3.13"/>
    </reaction>
</comment>
<comment type="cofactor">
    <cofactor evidence="1">
        <name>Mn(2+)</name>
        <dbReference type="ChEBI" id="CHEBI:29035"/>
    </cofactor>
</comment>
<comment type="pathway">
    <text evidence="1">Amino-acid biosynthesis; L-leucine biosynthesis; L-leucine from 3-methyl-2-oxobutanoate: step 1/4.</text>
</comment>
<comment type="subunit">
    <text evidence="1">Homodimer.</text>
</comment>
<comment type="subcellular location">
    <subcellularLocation>
        <location evidence="1">Cytoplasm</location>
    </subcellularLocation>
</comment>
<comment type="similarity">
    <text evidence="1">Belongs to the alpha-IPM synthase/homocitrate synthase family. LeuA type 1 subfamily.</text>
</comment>
<dbReference type="EC" id="2.3.3.13" evidence="1"/>
<dbReference type="EMBL" id="CP000554">
    <property type="protein sequence ID" value="ABM77669.1"/>
    <property type="molecule type" value="Genomic_DNA"/>
</dbReference>
<dbReference type="RefSeq" id="WP_011825575.1">
    <property type="nucleotide sequence ID" value="NC_008820.1"/>
</dbReference>
<dbReference type="SMR" id="A2C859"/>
<dbReference type="STRING" id="59922.P9303_09181"/>
<dbReference type="KEGG" id="pmf:P9303_09181"/>
<dbReference type="HOGENOM" id="CLU_022158_0_1_3"/>
<dbReference type="BioCyc" id="PMAR59922:G1G80-831-MONOMER"/>
<dbReference type="UniPathway" id="UPA00048">
    <property type="reaction ID" value="UER00070"/>
</dbReference>
<dbReference type="Proteomes" id="UP000002274">
    <property type="component" value="Chromosome"/>
</dbReference>
<dbReference type="GO" id="GO:0005737">
    <property type="term" value="C:cytoplasm"/>
    <property type="evidence" value="ECO:0007669"/>
    <property type="project" value="UniProtKB-SubCell"/>
</dbReference>
<dbReference type="GO" id="GO:0003852">
    <property type="term" value="F:2-isopropylmalate synthase activity"/>
    <property type="evidence" value="ECO:0007669"/>
    <property type="project" value="UniProtKB-UniRule"/>
</dbReference>
<dbReference type="GO" id="GO:0003985">
    <property type="term" value="F:acetyl-CoA C-acetyltransferase activity"/>
    <property type="evidence" value="ECO:0007669"/>
    <property type="project" value="UniProtKB-UniRule"/>
</dbReference>
<dbReference type="GO" id="GO:0030145">
    <property type="term" value="F:manganese ion binding"/>
    <property type="evidence" value="ECO:0007669"/>
    <property type="project" value="UniProtKB-UniRule"/>
</dbReference>
<dbReference type="GO" id="GO:0009098">
    <property type="term" value="P:L-leucine biosynthetic process"/>
    <property type="evidence" value="ECO:0007669"/>
    <property type="project" value="UniProtKB-UniRule"/>
</dbReference>
<dbReference type="CDD" id="cd07940">
    <property type="entry name" value="DRE_TIM_IPMS"/>
    <property type="match status" value="1"/>
</dbReference>
<dbReference type="FunFam" id="1.10.238.260:FF:000001">
    <property type="entry name" value="2-isopropylmalate synthase"/>
    <property type="match status" value="1"/>
</dbReference>
<dbReference type="FunFam" id="3.20.20.70:FF:000010">
    <property type="entry name" value="2-isopropylmalate synthase"/>
    <property type="match status" value="1"/>
</dbReference>
<dbReference type="FunFam" id="3.30.160.270:FF:000001">
    <property type="entry name" value="2-isopropylmalate synthase"/>
    <property type="match status" value="1"/>
</dbReference>
<dbReference type="Gene3D" id="1.10.238.260">
    <property type="match status" value="1"/>
</dbReference>
<dbReference type="Gene3D" id="3.30.160.270">
    <property type="match status" value="1"/>
</dbReference>
<dbReference type="Gene3D" id="3.20.20.70">
    <property type="entry name" value="Aldolase class I"/>
    <property type="match status" value="1"/>
</dbReference>
<dbReference type="HAMAP" id="MF_01025">
    <property type="entry name" value="LeuA_type1"/>
    <property type="match status" value="1"/>
</dbReference>
<dbReference type="InterPro" id="IPR050073">
    <property type="entry name" value="2-IPM_HCS-like"/>
</dbReference>
<dbReference type="InterPro" id="IPR013709">
    <property type="entry name" value="2-isopropylmalate_synth_dimer"/>
</dbReference>
<dbReference type="InterPro" id="IPR002034">
    <property type="entry name" value="AIPM/Hcit_synth_CS"/>
</dbReference>
<dbReference type="InterPro" id="IPR013785">
    <property type="entry name" value="Aldolase_TIM"/>
</dbReference>
<dbReference type="InterPro" id="IPR054691">
    <property type="entry name" value="LeuA/HCS_post-cat"/>
</dbReference>
<dbReference type="InterPro" id="IPR036230">
    <property type="entry name" value="LeuA_allosteric_dom_sf"/>
</dbReference>
<dbReference type="InterPro" id="IPR005671">
    <property type="entry name" value="LeuA_bact_synth"/>
</dbReference>
<dbReference type="InterPro" id="IPR000891">
    <property type="entry name" value="PYR_CT"/>
</dbReference>
<dbReference type="NCBIfam" id="TIGR00973">
    <property type="entry name" value="leuA_bact"/>
    <property type="match status" value="1"/>
</dbReference>
<dbReference type="NCBIfam" id="NF002086">
    <property type="entry name" value="PRK00915.1-3"/>
    <property type="match status" value="1"/>
</dbReference>
<dbReference type="PANTHER" id="PTHR10277:SF9">
    <property type="entry name" value="2-ISOPROPYLMALATE SYNTHASE 1, CHLOROPLASTIC-RELATED"/>
    <property type="match status" value="1"/>
</dbReference>
<dbReference type="PANTHER" id="PTHR10277">
    <property type="entry name" value="HOMOCITRATE SYNTHASE-RELATED"/>
    <property type="match status" value="1"/>
</dbReference>
<dbReference type="Pfam" id="PF22617">
    <property type="entry name" value="HCS_D2"/>
    <property type="match status" value="1"/>
</dbReference>
<dbReference type="Pfam" id="PF00682">
    <property type="entry name" value="HMGL-like"/>
    <property type="match status" value="1"/>
</dbReference>
<dbReference type="Pfam" id="PF08502">
    <property type="entry name" value="LeuA_dimer"/>
    <property type="match status" value="1"/>
</dbReference>
<dbReference type="SMART" id="SM00917">
    <property type="entry name" value="LeuA_dimer"/>
    <property type="match status" value="1"/>
</dbReference>
<dbReference type="SUPFAM" id="SSF110921">
    <property type="entry name" value="2-isopropylmalate synthase LeuA, allosteric (dimerisation) domain"/>
    <property type="match status" value="1"/>
</dbReference>
<dbReference type="SUPFAM" id="SSF51569">
    <property type="entry name" value="Aldolase"/>
    <property type="match status" value="1"/>
</dbReference>
<dbReference type="PROSITE" id="PS00815">
    <property type="entry name" value="AIPM_HOMOCIT_SYNTH_1"/>
    <property type="match status" value="1"/>
</dbReference>
<dbReference type="PROSITE" id="PS00816">
    <property type="entry name" value="AIPM_HOMOCIT_SYNTH_2"/>
    <property type="match status" value="1"/>
</dbReference>
<dbReference type="PROSITE" id="PS50991">
    <property type="entry name" value="PYR_CT"/>
    <property type="match status" value="1"/>
</dbReference>
<organism>
    <name type="scientific">Prochlorococcus marinus (strain MIT 9303)</name>
    <dbReference type="NCBI Taxonomy" id="59922"/>
    <lineage>
        <taxon>Bacteria</taxon>
        <taxon>Bacillati</taxon>
        <taxon>Cyanobacteriota</taxon>
        <taxon>Cyanophyceae</taxon>
        <taxon>Synechococcales</taxon>
        <taxon>Prochlorococcaceae</taxon>
        <taxon>Prochlorococcus</taxon>
    </lineage>
</organism>
<proteinExistence type="inferred from homology"/>
<sequence>MAKDPGRVLIFDTTLRDGEQSPGASLNLEEKLAIAQQLARLGVDVIEAGFPFASQGDFSAVQRIAQQVGGDEGPIICGLARASRADIKACADAVAPAPRRRIHTFIATSDIHLEHKLRKSRAEVLAIVPEMVAYARSLVDDVEFSCEDAARSDPEFLYEVIEAAIAAGAGTINIPDTVGFTTPSEFGALIAGIDCHVPNMNEAILSVHGHNDLGLAVANFLEAVKSGARQFECTINGIGERAGNAALEELVMALYVRRRYFNPFFGRESDSPTPLTAVRTEEITKTSRLVSNLTGMVVQPNKAIVGSNAFAHESGIHQDGVLKNRLTYEIVDARTVGLTDNRISLGKLSGRSAVRARLEELGYDLTREDLDEAFARFKDLADRKRDITDRDLEAIVSEQVQQPEARFQLRLVQVSCGSSLRPTATVILAQEDGQEQTAAAVGTGPVDAVCRALNALAGEPNELIEFSVKSVTEGIDAMGEVTIRLRRDGQLFSGHSADTDVVVAAAQAFVNALNRLVAGCGRQSLHPQHDAVLADRRPGI</sequence>
<reference key="1">
    <citation type="journal article" date="2007" name="PLoS Genet.">
        <title>Patterns and implications of gene gain and loss in the evolution of Prochlorococcus.</title>
        <authorList>
            <person name="Kettler G.C."/>
            <person name="Martiny A.C."/>
            <person name="Huang K."/>
            <person name="Zucker J."/>
            <person name="Coleman M.L."/>
            <person name="Rodrigue S."/>
            <person name="Chen F."/>
            <person name="Lapidus A."/>
            <person name="Ferriera S."/>
            <person name="Johnson J."/>
            <person name="Steglich C."/>
            <person name="Church G.M."/>
            <person name="Richardson P."/>
            <person name="Chisholm S.W."/>
        </authorList>
    </citation>
    <scope>NUCLEOTIDE SEQUENCE [LARGE SCALE GENOMIC DNA]</scope>
    <source>
        <strain>MIT 9303</strain>
    </source>
</reference>
<accession>A2C859</accession>